<evidence type="ECO:0000255" key="1">
    <source>
        <dbReference type="HAMAP-Rule" id="MF_01006"/>
    </source>
</evidence>
<accession>A8LQR9</accession>
<protein>
    <recommendedName>
        <fullName evidence="1">Undecaprenyl-diphosphatase</fullName>
        <ecNumber evidence="1">3.6.1.27</ecNumber>
    </recommendedName>
    <alternativeName>
        <fullName evidence="1">Bacitracin resistance protein</fullName>
    </alternativeName>
    <alternativeName>
        <fullName evidence="1">Undecaprenyl pyrophosphate phosphatase</fullName>
    </alternativeName>
</protein>
<comment type="function">
    <text evidence="1">Catalyzes the dephosphorylation of undecaprenyl diphosphate (UPP). Confers resistance to bacitracin.</text>
</comment>
<comment type="catalytic activity">
    <reaction evidence="1">
        <text>di-trans,octa-cis-undecaprenyl diphosphate + H2O = di-trans,octa-cis-undecaprenyl phosphate + phosphate + H(+)</text>
        <dbReference type="Rhea" id="RHEA:28094"/>
        <dbReference type="ChEBI" id="CHEBI:15377"/>
        <dbReference type="ChEBI" id="CHEBI:15378"/>
        <dbReference type="ChEBI" id="CHEBI:43474"/>
        <dbReference type="ChEBI" id="CHEBI:58405"/>
        <dbReference type="ChEBI" id="CHEBI:60392"/>
        <dbReference type="EC" id="3.6.1.27"/>
    </reaction>
</comment>
<comment type="subcellular location">
    <subcellularLocation>
        <location evidence="1">Cell inner membrane</location>
        <topology evidence="1">Multi-pass membrane protein</topology>
    </subcellularLocation>
</comment>
<comment type="miscellaneous">
    <text>Bacitracin is thought to be involved in the inhibition of peptidoglycan synthesis by sequestering undecaprenyl diphosphate, thereby reducing the pool of lipid carrier available.</text>
</comment>
<comment type="similarity">
    <text evidence="1">Belongs to the UppP family.</text>
</comment>
<keyword id="KW-0046">Antibiotic resistance</keyword>
<keyword id="KW-0997">Cell inner membrane</keyword>
<keyword id="KW-1003">Cell membrane</keyword>
<keyword id="KW-0133">Cell shape</keyword>
<keyword id="KW-0961">Cell wall biogenesis/degradation</keyword>
<keyword id="KW-0378">Hydrolase</keyword>
<keyword id="KW-0472">Membrane</keyword>
<keyword id="KW-0573">Peptidoglycan synthesis</keyword>
<keyword id="KW-1185">Reference proteome</keyword>
<keyword id="KW-0812">Transmembrane</keyword>
<keyword id="KW-1133">Transmembrane helix</keyword>
<organism>
    <name type="scientific">Dinoroseobacter shibae (strain DSM 16493 / NCIMB 14021 / DFL 12)</name>
    <dbReference type="NCBI Taxonomy" id="398580"/>
    <lineage>
        <taxon>Bacteria</taxon>
        <taxon>Pseudomonadati</taxon>
        <taxon>Pseudomonadota</taxon>
        <taxon>Alphaproteobacteria</taxon>
        <taxon>Rhodobacterales</taxon>
        <taxon>Roseobacteraceae</taxon>
        <taxon>Dinoroseobacter</taxon>
    </lineage>
</organism>
<gene>
    <name evidence="1" type="primary">uppP</name>
    <name type="ordered locus">Dshi_3593</name>
</gene>
<sequence>MTLFHLILVAVIQGLTEFLPVSSSGHLILLPELSGMADQGQVIDVAVHVGTLFAVVLYFRADVAVAVAGVGRLIRGRIDTPGAFLALCLLIATVPVMVVGLALNLTGLDQALRSMAVIGWTMLIFGIVLYWADQRGPVTRKAGAWTLRHAAIMGLWQALALIPGTSRSGITITGARLLGYGREDAAKLSMLMSIPTILASGGLLGVEVAAQADWALLKDAAIGAVFAFGAALLALTLMMRLLRTVSFTPYVIYRVCLGTILLIIAYS</sequence>
<name>UPPP_DINSH</name>
<feature type="chain" id="PRO_1000083977" description="Undecaprenyl-diphosphatase">
    <location>
        <begin position="1"/>
        <end position="267"/>
    </location>
</feature>
<feature type="transmembrane region" description="Helical" evidence="1">
    <location>
        <begin position="1"/>
        <end position="21"/>
    </location>
</feature>
<feature type="transmembrane region" description="Helical" evidence="1">
    <location>
        <begin position="49"/>
        <end position="69"/>
    </location>
</feature>
<feature type="transmembrane region" description="Helical" evidence="1">
    <location>
        <begin position="83"/>
        <end position="103"/>
    </location>
</feature>
<feature type="transmembrane region" description="Helical" evidence="1">
    <location>
        <begin position="111"/>
        <end position="131"/>
    </location>
</feature>
<feature type="transmembrane region" description="Helical" evidence="1">
    <location>
        <begin position="190"/>
        <end position="210"/>
    </location>
</feature>
<feature type="transmembrane region" description="Helical" evidence="1">
    <location>
        <begin position="219"/>
        <end position="239"/>
    </location>
</feature>
<feature type="transmembrane region" description="Helical" evidence="1">
    <location>
        <begin position="245"/>
        <end position="265"/>
    </location>
</feature>
<dbReference type="EC" id="3.6.1.27" evidence="1"/>
<dbReference type="EMBL" id="CP000830">
    <property type="protein sequence ID" value="ABV95326.1"/>
    <property type="molecule type" value="Genomic_DNA"/>
</dbReference>
<dbReference type="RefSeq" id="WP_012180249.1">
    <property type="nucleotide sequence ID" value="NC_009952.1"/>
</dbReference>
<dbReference type="SMR" id="A8LQR9"/>
<dbReference type="STRING" id="398580.Dshi_3593"/>
<dbReference type="KEGG" id="dsh:Dshi_3593"/>
<dbReference type="eggNOG" id="COG1968">
    <property type="taxonomic scope" value="Bacteria"/>
</dbReference>
<dbReference type="HOGENOM" id="CLU_060296_1_0_5"/>
<dbReference type="OrthoDB" id="9808289at2"/>
<dbReference type="Proteomes" id="UP000006833">
    <property type="component" value="Chromosome"/>
</dbReference>
<dbReference type="GO" id="GO:0005886">
    <property type="term" value="C:plasma membrane"/>
    <property type="evidence" value="ECO:0007669"/>
    <property type="project" value="UniProtKB-SubCell"/>
</dbReference>
<dbReference type="GO" id="GO:0050380">
    <property type="term" value="F:undecaprenyl-diphosphatase activity"/>
    <property type="evidence" value="ECO:0007669"/>
    <property type="project" value="UniProtKB-UniRule"/>
</dbReference>
<dbReference type="GO" id="GO:0071555">
    <property type="term" value="P:cell wall organization"/>
    <property type="evidence" value="ECO:0007669"/>
    <property type="project" value="UniProtKB-KW"/>
</dbReference>
<dbReference type="GO" id="GO:0009252">
    <property type="term" value="P:peptidoglycan biosynthetic process"/>
    <property type="evidence" value="ECO:0007669"/>
    <property type="project" value="UniProtKB-KW"/>
</dbReference>
<dbReference type="GO" id="GO:0008360">
    <property type="term" value="P:regulation of cell shape"/>
    <property type="evidence" value="ECO:0007669"/>
    <property type="project" value="UniProtKB-KW"/>
</dbReference>
<dbReference type="GO" id="GO:0046677">
    <property type="term" value="P:response to antibiotic"/>
    <property type="evidence" value="ECO:0007669"/>
    <property type="project" value="UniProtKB-UniRule"/>
</dbReference>
<dbReference type="HAMAP" id="MF_01006">
    <property type="entry name" value="Undec_diphosphatase"/>
    <property type="match status" value="1"/>
</dbReference>
<dbReference type="InterPro" id="IPR003824">
    <property type="entry name" value="UppP"/>
</dbReference>
<dbReference type="NCBIfam" id="NF001393">
    <property type="entry name" value="PRK00281.2-4"/>
    <property type="match status" value="1"/>
</dbReference>
<dbReference type="PANTHER" id="PTHR30622">
    <property type="entry name" value="UNDECAPRENYL-DIPHOSPHATASE"/>
    <property type="match status" value="1"/>
</dbReference>
<dbReference type="PANTHER" id="PTHR30622:SF4">
    <property type="entry name" value="UNDECAPRENYL-DIPHOSPHATASE"/>
    <property type="match status" value="1"/>
</dbReference>
<dbReference type="Pfam" id="PF02673">
    <property type="entry name" value="BacA"/>
    <property type="match status" value="1"/>
</dbReference>
<proteinExistence type="inferred from homology"/>
<reference key="1">
    <citation type="journal article" date="2010" name="ISME J.">
        <title>The complete genome sequence of the algal symbiont Dinoroseobacter shibae: a hitchhiker's guide to life in the sea.</title>
        <authorList>
            <person name="Wagner-Dobler I."/>
            <person name="Ballhausen B."/>
            <person name="Berger M."/>
            <person name="Brinkhoff T."/>
            <person name="Buchholz I."/>
            <person name="Bunk B."/>
            <person name="Cypionka H."/>
            <person name="Daniel R."/>
            <person name="Drepper T."/>
            <person name="Gerdts G."/>
            <person name="Hahnke S."/>
            <person name="Han C."/>
            <person name="Jahn D."/>
            <person name="Kalhoefer D."/>
            <person name="Kiss H."/>
            <person name="Klenk H.P."/>
            <person name="Kyrpides N."/>
            <person name="Liebl W."/>
            <person name="Liesegang H."/>
            <person name="Meincke L."/>
            <person name="Pati A."/>
            <person name="Petersen J."/>
            <person name="Piekarski T."/>
            <person name="Pommerenke C."/>
            <person name="Pradella S."/>
            <person name="Pukall R."/>
            <person name="Rabus R."/>
            <person name="Stackebrandt E."/>
            <person name="Thole S."/>
            <person name="Thompson L."/>
            <person name="Tielen P."/>
            <person name="Tomasch J."/>
            <person name="von Jan M."/>
            <person name="Wanphrut N."/>
            <person name="Wichels A."/>
            <person name="Zech H."/>
            <person name="Simon M."/>
        </authorList>
    </citation>
    <scope>NUCLEOTIDE SEQUENCE [LARGE SCALE GENOMIC DNA]</scope>
    <source>
        <strain>DSM 16493 / NCIMB 14021 / DFL 12</strain>
    </source>
</reference>